<gene>
    <name evidence="1" type="primary">rnhB</name>
    <name type="ordered locus">SACE_6047</name>
</gene>
<organism>
    <name type="scientific">Saccharopolyspora erythraea (strain ATCC 11635 / DSM 40517 / JCM 4748 / NBRC 13426 / NCIMB 8594 / NRRL 2338)</name>
    <dbReference type="NCBI Taxonomy" id="405948"/>
    <lineage>
        <taxon>Bacteria</taxon>
        <taxon>Bacillati</taxon>
        <taxon>Actinomycetota</taxon>
        <taxon>Actinomycetes</taxon>
        <taxon>Pseudonocardiales</taxon>
        <taxon>Pseudonocardiaceae</taxon>
        <taxon>Saccharopolyspora</taxon>
    </lineage>
</organism>
<accession>A4FME5</accession>
<feature type="chain" id="PRO_0000334951" description="Ribonuclease HII">
    <location>
        <begin position="1"/>
        <end position="228"/>
    </location>
</feature>
<feature type="domain" description="RNase H type-2" evidence="2">
    <location>
        <begin position="11"/>
        <end position="202"/>
    </location>
</feature>
<feature type="binding site" evidence="1">
    <location>
        <position position="17"/>
    </location>
    <ligand>
        <name>a divalent metal cation</name>
        <dbReference type="ChEBI" id="CHEBI:60240"/>
    </ligand>
</feature>
<feature type="binding site" evidence="1">
    <location>
        <position position="18"/>
    </location>
    <ligand>
        <name>a divalent metal cation</name>
        <dbReference type="ChEBI" id="CHEBI:60240"/>
    </ligand>
</feature>
<feature type="binding site" evidence="1">
    <location>
        <position position="111"/>
    </location>
    <ligand>
        <name>a divalent metal cation</name>
        <dbReference type="ChEBI" id="CHEBI:60240"/>
    </ligand>
</feature>
<evidence type="ECO:0000255" key="1">
    <source>
        <dbReference type="HAMAP-Rule" id="MF_00052"/>
    </source>
</evidence>
<evidence type="ECO:0000255" key="2">
    <source>
        <dbReference type="PROSITE-ProRule" id="PRU01319"/>
    </source>
</evidence>
<dbReference type="EC" id="3.1.26.4" evidence="1"/>
<dbReference type="EMBL" id="AM420293">
    <property type="protein sequence ID" value="CAM05220.1"/>
    <property type="molecule type" value="Genomic_DNA"/>
</dbReference>
<dbReference type="SMR" id="A4FME5"/>
<dbReference type="STRING" id="405948.SACE_6047"/>
<dbReference type="KEGG" id="sen:SACE_6047"/>
<dbReference type="eggNOG" id="COG0164">
    <property type="taxonomic scope" value="Bacteria"/>
</dbReference>
<dbReference type="HOGENOM" id="CLU_036532_1_0_11"/>
<dbReference type="Proteomes" id="UP000006728">
    <property type="component" value="Chromosome"/>
</dbReference>
<dbReference type="GO" id="GO:0005737">
    <property type="term" value="C:cytoplasm"/>
    <property type="evidence" value="ECO:0007669"/>
    <property type="project" value="UniProtKB-SubCell"/>
</dbReference>
<dbReference type="GO" id="GO:0032299">
    <property type="term" value="C:ribonuclease H2 complex"/>
    <property type="evidence" value="ECO:0007669"/>
    <property type="project" value="TreeGrafter"/>
</dbReference>
<dbReference type="GO" id="GO:0030145">
    <property type="term" value="F:manganese ion binding"/>
    <property type="evidence" value="ECO:0007669"/>
    <property type="project" value="UniProtKB-UniRule"/>
</dbReference>
<dbReference type="GO" id="GO:0003723">
    <property type="term" value="F:RNA binding"/>
    <property type="evidence" value="ECO:0007669"/>
    <property type="project" value="InterPro"/>
</dbReference>
<dbReference type="GO" id="GO:0004523">
    <property type="term" value="F:RNA-DNA hybrid ribonuclease activity"/>
    <property type="evidence" value="ECO:0007669"/>
    <property type="project" value="UniProtKB-UniRule"/>
</dbReference>
<dbReference type="GO" id="GO:0043137">
    <property type="term" value="P:DNA replication, removal of RNA primer"/>
    <property type="evidence" value="ECO:0007669"/>
    <property type="project" value="TreeGrafter"/>
</dbReference>
<dbReference type="GO" id="GO:0006298">
    <property type="term" value="P:mismatch repair"/>
    <property type="evidence" value="ECO:0007669"/>
    <property type="project" value="TreeGrafter"/>
</dbReference>
<dbReference type="CDD" id="cd07182">
    <property type="entry name" value="RNase_HII_bacteria_HII_like"/>
    <property type="match status" value="1"/>
</dbReference>
<dbReference type="Gene3D" id="3.30.420.10">
    <property type="entry name" value="Ribonuclease H-like superfamily/Ribonuclease H"/>
    <property type="match status" value="1"/>
</dbReference>
<dbReference type="HAMAP" id="MF_00052_B">
    <property type="entry name" value="RNase_HII_B"/>
    <property type="match status" value="1"/>
</dbReference>
<dbReference type="InterPro" id="IPR022898">
    <property type="entry name" value="RNase_HII"/>
</dbReference>
<dbReference type="InterPro" id="IPR001352">
    <property type="entry name" value="RNase_HII/HIII"/>
</dbReference>
<dbReference type="InterPro" id="IPR024567">
    <property type="entry name" value="RNase_HII/HIII_dom"/>
</dbReference>
<dbReference type="InterPro" id="IPR012337">
    <property type="entry name" value="RNaseH-like_sf"/>
</dbReference>
<dbReference type="InterPro" id="IPR036397">
    <property type="entry name" value="RNaseH_sf"/>
</dbReference>
<dbReference type="NCBIfam" id="NF000595">
    <property type="entry name" value="PRK00015.1-3"/>
    <property type="match status" value="1"/>
</dbReference>
<dbReference type="NCBIfam" id="NF000598">
    <property type="entry name" value="PRK00015.2-2"/>
    <property type="match status" value="1"/>
</dbReference>
<dbReference type="PANTHER" id="PTHR10954">
    <property type="entry name" value="RIBONUCLEASE H2 SUBUNIT A"/>
    <property type="match status" value="1"/>
</dbReference>
<dbReference type="PANTHER" id="PTHR10954:SF18">
    <property type="entry name" value="RIBONUCLEASE HII"/>
    <property type="match status" value="1"/>
</dbReference>
<dbReference type="Pfam" id="PF01351">
    <property type="entry name" value="RNase_HII"/>
    <property type="match status" value="1"/>
</dbReference>
<dbReference type="SUPFAM" id="SSF53098">
    <property type="entry name" value="Ribonuclease H-like"/>
    <property type="match status" value="1"/>
</dbReference>
<dbReference type="PROSITE" id="PS51975">
    <property type="entry name" value="RNASE_H_2"/>
    <property type="match status" value="1"/>
</dbReference>
<keyword id="KW-0963">Cytoplasm</keyword>
<keyword id="KW-0255">Endonuclease</keyword>
<keyword id="KW-0378">Hydrolase</keyword>
<keyword id="KW-0464">Manganese</keyword>
<keyword id="KW-0479">Metal-binding</keyword>
<keyword id="KW-0540">Nuclease</keyword>
<keyword id="KW-1185">Reference proteome</keyword>
<name>RNH2_SACEN</name>
<sequence>MQSALDRRGLGPVAGVDEAGRGACAGPLVVAACALKPGDGRRFEGLTDSKVLSPAERERLYDVIQAKALSLSVIVIPADEVDALGIHVANLEGMRRAVAQLSVAPGYVLTDGFRVPGLGAPSVAVVKGDLVAACVAAASVLAKVTRDRIMTGLHEQFPVYGFDEHKGYCTSDHTARLTEHGPCEEHRWCYANVVAAAQLHGMRSPRTVSSKPGLFDAFEGDVVDNEQL</sequence>
<proteinExistence type="inferred from homology"/>
<comment type="function">
    <text evidence="1">Endonuclease that specifically degrades the RNA of RNA-DNA hybrids.</text>
</comment>
<comment type="catalytic activity">
    <reaction evidence="1">
        <text>Endonucleolytic cleavage to 5'-phosphomonoester.</text>
        <dbReference type="EC" id="3.1.26.4"/>
    </reaction>
</comment>
<comment type="cofactor">
    <cofactor evidence="1">
        <name>Mn(2+)</name>
        <dbReference type="ChEBI" id="CHEBI:29035"/>
    </cofactor>
    <cofactor evidence="1">
        <name>Mg(2+)</name>
        <dbReference type="ChEBI" id="CHEBI:18420"/>
    </cofactor>
    <text evidence="1">Manganese or magnesium. Binds 1 divalent metal ion per monomer in the absence of substrate. May bind a second metal ion after substrate binding.</text>
</comment>
<comment type="subcellular location">
    <subcellularLocation>
        <location evidence="1">Cytoplasm</location>
    </subcellularLocation>
</comment>
<comment type="similarity">
    <text evidence="1">Belongs to the RNase HII family.</text>
</comment>
<reference key="1">
    <citation type="journal article" date="2007" name="Nat. Biotechnol.">
        <title>Complete genome sequence of the erythromycin-producing bacterium Saccharopolyspora erythraea NRRL23338.</title>
        <authorList>
            <person name="Oliynyk M."/>
            <person name="Samborskyy M."/>
            <person name="Lester J.B."/>
            <person name="Mironenko T."/>
            <person name="Scott N."/>
            <person name="Dickens S."/>
            <person name="Haydock S.F."/>
            <person name="Leadlay P.F."/>
        </authorList>
    </citation>
    <scope>NUCLEOTIDE SEQUENCE [LARGE SCALE GENOMIC DNA]</scope>
    <source>
        <strain>ATCC 11635 / DSM 40517 / JCM 4748 / NBRC 13426 / NCIMB 8594 / NRRL 2338</strain>
    </source>
</reference>
<protein>
    <recommendedName>
        <fullName evidence="1">Ribonuclease HII</fullName>
        <shortName evidence="1">RNase HII</shortName>
        <ecNumber evidence="1">3.1.26.4</ecNumber>
    </recommendedName>
</protein>